<evidence type="ECO:0000255" key="1"/>
<evidence type="ECO:0000269" key="2">
    <source>
    </source>
</evidence>
<evidence type="ECO:0000269" key="3">
    <source>
    </source>
</evidence>
<evidence type="ECO:0000269" key="4">
    <source>
    </source>
</evidence>
<evidence type="ECO:0000269" key="5">
    <source>
    </source>
</evidence>
<evidence type="ECO:0000303" key="6">
    <source>
    </source>
</evidence>
<evidence type="ECO:0000303" key="7">
    <source>
    </source>
</evidence>
<evidence type="ECO:0000303" key="8">
    <source>
    </source>
</evidence>
<evidence type="ECO:0000305" key="9"/>
<evidence type="ECO:0000312" key="10">
    <source>
        <dbReference type="Araport" id="AT2G19600"/>
    </source>
</evidence>
<evidence type="ECO:0000312" key="11">
    <source>
        <dbReference type="EMBL" id="AAD10158.1"/>
    </source>
</evidence>
<comment type="function">
    <text evidence="2 3 4 5">Electroneutral K(+)/H(+) efflux antiporter involved in K(+) homeostasis and osmotic adjustment (PubMed:24278440, PubMed:30255504, PubMed:30309966, PubMed:31296940). Together with KEA5 and KEA6, promotes growth and development, and facilitates endosomal pH and ions homeostasis, as well as salt tolerance (e.g. K(+), NaCl and LiCl), probably by supporting cell wall biosynthesis during rapid etiolated seedling growth (PubMed:30255504, PubMed:30309966).</text>
</comment>
<comment type="catalytic activity">
    <reaction evidence="2 4 5">
        <text>K(+)(in) + H(+)(out) = K(+)(out) + H(+)(in)</text>
        <dbReference type="Rhea" id="RHEA:29467"/>
        <dbReference type="ChEBI" id="CHEBI:15378"/>
        <dbReference type="ChEBI" id="CHEBI:29103"/>
    </reaction>
</comment>
<comment type="biophysicochemical properties">
    <phDependence>
        <text evidence="2">Optimum pH is 5.8.</text>
    </phDependence>
</comment>
<comment type="subcellular location">
    <subcellularLocation>
        <location evidence="3 4">Golgi apparatus membrane</location>
        <topology evidence="1">Multi-pass membrane protein</topology>
    </subcellularLocation>
    <subcellularLocation>
        <location evidence="4">Golgi apparatus</location>
        <location evidence="4">trans-Golgi network membrane</location>
        <topology evidence="1">Multi-pass membrane protein</topology>
    </subcellularLocation>
    <subcellularLocation>
        <location evidence="4">Prevacuolar compartment membrane</location>
        <topology evidence="1">Multi-pass membrane protein</topology>
    </subcellularLocation>
    <subcellularLocation>
        <location evidence="4">Endomembrane system</location>
        <topology evidence="1">Multi-pass membrane protein</topology>
    </subcellularLocation>
</comment>
<comment type="alternative products">
    <event type="alternative splicing"/>
    <isoform>
        <id>Q9ZUN3-1</id>
        <name>1</name>
        <sequence type="displayed"/>
    </isoform>
    <isoform>
        <id>Q9ZUN3-2</id>
        <name>2</name>
        <sequence type="described" ref="VSP_039363"/>
    </isoform>
</comment>
<comment type="tissue specificity">
    <text evidence="2 3 4">Expressed in roots, stems, leaves, flowers and silique.</text>
</comment>
<comment type="developmental stage">
    <text evidence="4">In roots, restricted to the vasculature and the tips of primary and secondary roots (PubMed:30309966). Also observed in the vascular bundles and tips of cotyledons, the base of true leaves, the ovarian stigma and pollen grains within the anthers, and the tip and base of the siliques (PubMed:30309966).</text>
</comment>
<comment type="induction">
    <text evidence="2">Up-regulated by low K(+) stress and down-regulated by high K(+).</text>
</comment>
<comment type="disruption phenotype">
    <text evidence="3 4">No visible phenotype (PubMed:30255504, PubMed:30309966). The triple mutant kea4 kea5 kea6 is compromised in cell wall biosynthesis and has small rosettes, short seedlings, and is sensitive to low potassium K(+) availability and to high salinity (e.g. K(+), NaCl and LiCl); it also exhibits a reduced luminal pH in the Golgi, trans-Golgi network, prevacuolar compartment and vacuole (PubMed:30255504, PubMed:30309966). These phenotypes are partially suppressed by the cell wall-derived pectin homogalacturonan trigalacturonic GalA(3) in the dark but not in light conditions (PubMed:30255504).</text>
</comment>
<comment type="miscellaneous">
    <molecule>Isoform 2</molecule>
    <text evidence="9">May be due to a competing acceptor splice site.</text>
</comment>
<comment type="similarity">
    <text evidence="9">Belongs to the monovalent cation:proton antiporter 2 (CPA2) transporter (TC 2.A.37) family. KEA (TC 2.A.37.1) subfamily.</text>
</comment>
<comment type="sequence caution" evidence="9">
    <conflict type="erroneous gene model prediction">
        <sequence resource="EMBL-CDS" id="AAD10158"/>
    </conflict>
</comment>
<gene>
    <name evidence="6 8" type="primary">KEA4</name>
    <name evidence="10" type="ordered locus">At2g19600</name>
    <name evidence="11" type="ORF">F3P11.20</name>
</gene>
<organism>
    <name type="scientific">Arabidopsis thaliana</name>
    <name type="common">Mouse-ear cress</name>
    <dbReference type="NCBI Taxonomy" id="3702"/>
    <lineage>
        <taxon>Eukaryota</taxon>
        <taxon>Viridiplantae</taxon>
        <taxon>Streptophyta</taxon>
        <taxon>Embryophyta</taxon>
        <taxon>Tracheophyta</taxon>
        <taxon>Spermatophyta</taxon>
        <taxon>Magnoliopsida</taxon>
        <taxon>eudicotyledons</taxon>
        <taxon>Gunneridae</taxon>
        <taxon>Pentapetalae</taxon>
        <taxon>rosids</taxon>
        <taxon>malvids</taxon>
        <taxon>Brassicales</taxon>
        <taxon>Brassicaceae</taxon>
        <taxon>Camelineae</taxon>
        <taxon>Arabidopsis</taxon>
    </lineage>
</organism>
<name>KEA4_ARATH</name>
<accession>Q9ZUN3</accession>
<feature type="signal peptide" evidence="1">
    <location>
        <begin position="1"/>
        <end position="35"/>
    </location>
</feature>
<feature type="chain" id="PRO_0000395100" description="K(+) efflux antiporter 4" evidence="1">
    <location>
        <begin position="36"/>
        <end position="592"/>
    </location>
</feature>
<feature type="transmembrane region" description="Helical" evidence="1">
    <location>
        <begin position="169"/>
        <end position="189"/>
    </location>
</feature>
<feature type="transmembrane region" description="Helical" evidence="1">
    <location>
        <begin position="193"/>
        <end position="213"/>
    </location>
</feature>
<feature type="transmembrane region" description="Helical" evidence="1">
    <location>
        <begin position="221"/>
        <end position="241"/>
    </location>
</feature>
<feature type="transmembrane region" description="Helical" evidence="1">
    <location>
        <begin position="248"/>
        <end position="268"/>
    </location>
</feature>
<feature type="transmembrane region" description="Helical" evidence="1">
    <location>
        <begin position="279"/>
        <end position="299"/>
    </location>
</feature>
<feature type="transmembrane region" description="Helical" evidence="1">
    <location>
        <begin position="313"/>
        <end position="333"/>
    </location>
</feature>
<feature type="transmembrane region" description="Helical" evidence="1">
    <location>
        <begin position="343"/>
        <end position="363"/>
    </location>
</feature>
<feature type="transmembrane region" description="Helical" evidence="1">
    <location>
        <begin position="388"/>
        <end position="408"/>
    </location>
</feature>
<feature type="transmembrane region" description="Helical" evidence="1">
    <location>
        <begin position="437"/>
        <end position="457"/>
    </location>
</feature>
<feature type="transmembrane region" description="Helical" evidence="1">
    <location>
        <begin position="462"/>
        <end position="482"/>
    </location>
</feature>
<feature type="transmembrane region" description="Helical" evidence="1">
    <location>
        <begin position="491"/>
        <end position="511"/>
    </location>
</feature>
<feature type="transmembrane region" description="Helical" evidence="1">
    <location>
        <begin position="535"/>
        <end position="555"/>
    </location>
</feature>
<feature type="splice variant" id="VSP_039363" description="In isoform 2." evidence="7">
    <location>
        <begin position="1"/>
        <end position="261"/>
    </location>
</feature>
<sequence length="592" mass="64249">MRRCKNNTDKFSVITMRLLTLLLICTFFFFFSFAYSAESDNETDSVVTREINGTVVESNATSAKPREDSFADMIDRALEKEFPDNDQNEVPDPGSFNNSVADQQAVLETVARVKPKKNETKTKEEKSFFNLDNENGVEDTPRLIDRKDNVFIMSNPKSKYPVLQLDLRLISDLVVVIVSATCGGIAFACAGQPVITGYLLAGSIIGPGGLSFVSEMVQVETVAQFGVIFLLFALGLEFSAAKLRVVRAVAIPGGLLQIFLFMCLSGITASLCGGKLTEGIFVGAFLSMSSTAVVLKFLMERNSISALHGQITVGTLILQDCAVGLLFALLPVLGGTSGVLQGVLSMAKSLAILIAFLGALFVLSRTWVPWFLKLMTSLSSQTNELYQLAAVAFCLLVAWCSDKLGLSLELGSFAAGVMISTTDLAQHTLEQVEPIRNFFAALFLASIGMLIHMHFLWNHVDILLAAVLLVIVIKTVVVAIVVKVFGYNNKTAVLVGMSLAQIGEFAFVLLSRASNLHLIESKLYLLLLGTTALSLVTTPLLFKLIPAVVHLGVLLRWFSPDSSTEIGFKGELYHSESAKRISLMIQGSLHDS</sequence>
<reference key="1">
    <citation type="journal article" date="1999" name="Nature">
        <title>Sequence and analysis of chromosome 2 of the plant Arabidopsis thaliana.</title>
        <authorList>
            <person name="Lin X."/>
            <person name="Kaul S."/>
            <person name="Rounsley S.D."/>
            <person name="Shea T.P."/>
            <person name="Benito M.-I."/>
            <person name="Town C.D."/>
            <person name="Fujii C.Y."/>
            <person name="Mason T.M."/>
            <person name="Bowman C.L."/>
            <person name="Barnstead M.E."/>
            <person name="Feldblyum T.V."/>
            <person name="Buell C.R."/>
            <person name="Ketchum K.A."/>
            <person name="Lee J.J."/>
            <person name="Ronning C.M."/>
            <person name="Koo H.L."/>
            <person name="Moffat K.S."/>
            <person name="Cronin L.A."/>
            <person name="Shen M."/>
            <person name="Pai G."/>
            <person name="Van Aken S."/>
            <person name="Umayam L."/>
            <person name="Tallon L.J."/>
            <person name="Gill J.E."/>
            <person name="Adams M.D."/>
            <person name="Carrera A.J."/>
            <person name="Creasy T.H."/>
            <person name="Goodman H.M."/>
            <person name="Somerville C.R."/>
            <person name="Copenhaver G.P."/>
            <person name="Preuss D."/>
            <person name="Nierman W.C."/>
            <person name="White O."/>
            <person name="Eisen J.A."/>
            <person name="Salzberg S.L."/>
            <person name="Fraser C.M."/>
            <person name="Venter J.C."/>
        </authorList>
    </citation>
    <scope>NUCLEOTIDE SEQUENCE [LARGE SCALE GENOMIC DNA]</scope>
    <source>
        <strain>cv. Columbia</strain>
    </source>
</reference>
<reference key="2">
    <citation type="journal article" date="2017" name="Plant J.">
        <title>Araport11: a complete reannotation of the Arabidopsis thaliana reference genome.</title>
        <authorList>
            <person name="Cheng C.Y."/>
            <person name="Krishnakumar V."/>
            <person name="Chan A.P."/>
            <person name="Thibaud-Nissen F."/>
            <person name="Schobel S."/>
            <person name="Town C.D."/>
        </authorList>
    </citation>
    <scope>GENOME REANNOTATION</scope>
    <source>
        <strain>cv. Columbia</strain>
    </source>
</reference>
<reference key="3">
    <citation type="journal article" date="2003" name="Science">
        <title>Empirical analysis of transcriptional activity in the Arabidopsis genome.</title>
        <authorList>
            <person name="Yamada K."/>
            <person name="Lim J."/>
            <person name="Dale J.M."/>
            <person name="Chen H."/>
            <person name="Shinn P."/>
            <person name="Palm C.J."/>
            <person name="Southwick A.M."/>
            <person name="Wu H.C."/>
            <person name="Kim C.J."/>
            <person name="Nguyen M."/>
            <person name="Pham P.K."/>
            <person name="Cheuk R.F."/>
            <person name="Karlin-Newmann G."/>
            <person name="Liu S.X."/>
            <person name="Lam B."/>
            <person name="Sakano H."/>
            <person name="Wu T."/>
            <person name="Yu G."/>
            <person name="Miranda M."/>
            <person name="Quach H.L."/>
            <person name="Tripp M."/>
            <person name="Chang C.H."/>
            <person name="Lee J.M."/>
            <person name="Toriumi M.J."/>
            <person name="Chan M.M."/>
            <person name="Tang C.C."/>
            <person name="Onodera C.S."/>
            <person name="Deng J.M."/>
            <person name="Akiyama K."/>
            <person name="Ansari Y."/>
            <person name="Arakawa T."/>
            <person name="Banh J."/>
            <person name="Banno F."/>
            <person name="Bowser L."/>
            <person name="Brooks S.Y."/>
            <person name="Carninci P."/>
            <person name="Chao Q."/>
            <person name="Choy N."/>
            <person name="Enju A."/>
            <person name="Goldsmith A.D."/>
            <person name="Gurjal M."/>
            <person name="Hansen N.F."/>
            <person name="Hayashizaki Y."/>
            <person name="Johnson-Hopson C."/>
            <person name="Hsuan V.W."/>
            <person name="Iida K."/>
            <person name="Karnes M."/>
            <person name="Khan S."/>
            <person name="Koesema E."/>
            <person name="Ishida J."/>
            <person name="Jiang P.X."/>
            <person name="Jones T."/>
            <person name="Kawai J."/>
            <person name="Kamiya A."/>
            <person name="Meyers C."/>
            <person name="Nakajima M."/>
            <person name="Narusaka M."/>
            <person name="Seki M."/>
            <person name="Sakurai T."/>
            <person name="Satou M."/>
            <person name="Tamse R."/>
            <person name="Vaysberg M."/>
            <person name="Wallender E.K."/>
            <person name="Wong C."/>
            <person name="Yamamura Y."/>
            <person name="Yuan S."/>
            <person name="Shinozaki K."/>
            <person name="Davis R.W."/>
            <person name="Theologis A."/>
            <person name="Ecker J.R."/>
        </authorList>
    </citation>
    <scope>NUCLEOTIDE SEQUENCE [LARGE SCALE MRNA] (ISOFORM 2)</scope>
    <source>
        <strain>cv. Columbia</strain>
    </source>
</reference>
<reference key="4">
    <citation type="journal article" date="2001" name="Plant Physiol.">
        <title>Phylogenetic relationships within cation transporter families of Arabidopsis.</title>
        <authorList>
            <person name="Maeser P."/>
            <person name="Thomine S."/>
            <person name="Schroeder J.I."/>
            <person name="Ward J.M."/>
            <person name="Hirschi K."/>
            <person name="Sze H."/>
            <person name="Talke I.N."/>
            <person name="Amtmann A."/>
            <person name="Maathuis F.J.M."/>
            <person name="Sanders D."/>
            <person name="Harper J.F."/>
            <person name="Tchieu J."/>
            <person name="Gribskov M."/>
            <person name="Persans M.W."/>
            <person name="Salt D.E."/>
            <person name="Kim S.A."/>
            <person name="Guerinot M.L."/>
        </authorList>
    </citation>
    <scope>GENE FAMILY</scope>
    <scope>NOMENCLATURE</scope>
</reference>
<reference key="5">
    <citation type="journal article" date="2013" name="PLoS ONE">
        <title>A novel AtKEA gene family, homolog of bacterial K+/H+ antiporters, plays potential roles in K+ homeostasis and osmotic adjustment in Arabidopsis.</title>
        <authorList>
            <person name="Zheng S."/>
            <person name="Pan T."/>
            <person name="Fan L."/>
            <person name="Qiu Q.S."/>
        </authorList>
    </citation>
    <scope>FUNCTION</scope>
    <scope>GENE FAMILY</scope>
    <scope>TISSUE SPECIFICITY</scope>
    <scope>INDUCTION</scope>
    <scope>TRANSPORTER ACTIVITY</scope>
    <scope>BIOPHYSICOCHEMICAL PROPERTIES</scope>
</reference>
<reference key="6">
    <citation type="journal article" date="2018" name="Plant Physiol.">
        <title>K+ efflux antiporters 4, 5, and 6 mediate pH and K+ homeostasis in endomembrane compartments.</title>
        <authorList>
            <person name="Zhu X."/>
            <person name="Pan T."/>
            <person name="Zhang X."/>
            <person name="Fan L."/>
            <person name="Quintero F.J."/>
            <person name="Zhao H."/>
            <person name="Su X."/>
            <person name="Li X."/>
            <person name="Villalta I."/>
            <person name="Mendoza I."/>
            <person name="Shen J."/>
            <person name="Jiang L."/>
            <person name="Pardo J.M."/>
            <person name="Qiu Q.-S."/>
        </authorList>
    </citation>
    <scope>FUNCTION</scope>
    <scope>DISRUPTION PHENOTYPE</scope>
    <scope>TRANSPORTER ACTIVITY</scope>
    <scope>TISSUE SPECIFICITY</scope>
    <scope>DEVELOPMENTAL STAGE</scope>
    <scope>SUBCELLULAR LOCATION</scope>
    <source>
        <strain>cv. Columbia</strain>
    </source>
</reference>
<reference key="7">
    <citation type="journal article" date="2019" name="Plant Cell Environ.">
        <title>Golgi-localized cation/proton exchangers regulate ionic homeostasis and skotomorphogenesis in Arabidopsis.</title>
        <authorList>
            <person name="Wang Y."/>
            <person name="Tang R.-J."/>
            <person name="Yang X."/>
            <person name="Zheng X."/>
            <person name="Shao Q."/>
            <person name="Tang Q.-L."/>
            <person name="Fu A."/>
            <person name="Luan S."/>
        </authorList>
    </citation>
    <scope>FUNCTION</scope>
    <scope>DISRUPTION PHENOTYPE</scope>
    <scope>SUBCELLULAR LOCATION</scope>
    <scope>TISSUE SPECIFICITY</scope>
    <source>
        <strain>cv. Columbia</strain>
    </source>
</reference>
<reference key="8">
    <citation type="journal article" date="2019" name="Sci. Rep.">
        <title>Evidence for potassium transport activity of Arabidopsis KEA1-KEA6.</title>
        <authorList>
            <person name="Tsujii M."/>
            <person name="Kera K."/>
            <person name="Hamamoto S."/>
            <person name="Kuromori T."/>
            <person name="Shikanai T."/>
            <person name="Uozumi N."/>
        </authorList>
    </citation>
    <scope>FUNCTION</scope>
    <scope>TRANSPORTER ACTIVITY</scope>
    <scope>GENE FAMILY</scope>
    <scope>NOMENCLATURE</scope>
    <source>
        <strain>cv. Columbia</strain>
    </source>
</reference>
<dbReference type="EMBL" id="AC005917">
    <property type="protein sequence ID" value="AAD10158.1"/>
    <property type="status" value="ALT_SEQ"/>
    <property type="molecule type" value="Genomic_DNA"/>
</dbReference>
<dbReference type="EMBL" id="CP002685">
    <property type="protein sequence ID" value="AEC06899.1"/>
    <property type="molecule type" value="Genomic_DNA"/>
</dbReference>
<dbReference type="EMBL" id="AY091119">
    <property type="status" value="NOT_ANNOTATED_CDS"/>
    <property type="molecule type" value="mRNA"/>
</dbReference>
<dbReference type="PIR" id="G84578">
    <property type="entry name" value="G84578"/>
</dbReference>
<dbReference type="RefSeq" id="NP_849990.1">
    <molecule id="Q9ZUN3-1"/>
    <property type="nucleotide sequence ID" value="NM_179659.2"/>
</dbReference>
<dbReference type="SMR" id="Q9ZUN3"/>
<dbReference type="FunCoup" id="Q9ZUN3">
    <property type="interactions" value="2549"/>
</dbReference>
<dbReference type="STRING" id="3702.Q9ZUN3"/>
<dbReference type="TCDB" id="2.A.37.1.13">
    <property type="family name" value="the monovalent cation:proton antiporter-2 (cpa2) family"/>
</dbReference>
<dbReference type="iPTMnet" id="Q9ZUN3"/>
<dbReference type="PaxDb" id="3702-AT2G19600.1"/>
<dbReference type="ProteomicsDB" id="238212">
    <molecule id="Q9ZUN3-1"/>
</dbReference>
<dbReference type="EnsemblPlants" id="AT2G19600.1">
    <molecule id="Q9ZUN3-1"/>
    <property type="protein sequence ID" value="AT2G19600.1"/>
    <property type="gene ID" value="AT2G19600"/>
</dbReference>
<dbReference type="GeneID" id="816479"/>
<dbReference type="Gramene" id="AT2G19600.1">
    <molecule id="Q9ZUN3-1"/>
    <property type="protein sequence ID" value="AT2G19600.1"/>
    <property type="gene ID" value="AT2G19600"/>
</dbReference>
<dbReference type="KEGG" id="ath:AT2G19600"/>
<dbReference type="Araport" id="AT2G19600"/>
<dbReference type="TAIR" id="AT2G19600">
    <property type="gene designation" value="KEA4"/>
</dbReference>
<dbReference type="eggNOG" id="KOG1650">
    <property type="taxonomic scope" value="Eukaryota"/>
</dbReference>
<dbReference type="HOGENOM" id="CLU_005126_11_1_1"/>
<dbReference type="InParanoid" id="Q9ZUN3"/>
<dbReference type="OMA" id="IKAHASK"/>
<dbReference type="PhylomeDB" id="Q9ZUN3"/>
<dbReference type="PRO" id="PR:Q9ZUN3"/>
<dbReference type="Proteomes" id="UP000006548">
    <property type="component" value="Chromosome 2"/>
</dbReference>
<dbReference type="ExpressionAtlas" id="Q9ZUN3">
    <property type="expression patterns" value="baseline and differential"/>
</dbReference>
<dbReference type="GO" id="GO:0000139">
    <property type="term" value="C:Golgi membrane"/>
    <property type="evidence" value="ECO:0007669"/>
    <property type="project" value="UniProtKB-SubCell"/>
</dbReference>
<dbReference type="GO" id="GO:0000138">
    <property type="term" value="C:Golgi trans cisterna"/>
    <property type="evidence" value="ECO:0007005"/>
    <property type="project" value="TAIR"/>
</dbReference>
<dbReference type="GO" id="GO:0015386">
    <property type="term" value="F:potassium:proton antiporter activity"/>
    <property type="evidence" value="ECO:0007669"/>
    <property type="project" value="InterPro"/>
</dbReference>
<dbReference type="Gene3D" id="1.20.1530.20">
    <property type="match status" value="1"/>
</dbReference>
<dbReference type="InterPro" id="IPR006153">
    <property type="entry name" value="Cation/H_exchanger_TM"/>
</dbReference>
<dbReference type="InterPro" id="IPR045158">
    <property type="entry name" value="KEA4/5/6-like"/>
</dbReference>
<dbReference type="InterPro" id="IPR038770">
    <property type="entry name" value="Na+/solute_symporter_sf"/>
</dbReference>
<dbReference type="PANTHER" id="PTHR16254">
    <property type="entry name" value="POTASSIUM/PROTON ANTIPORTER-RELATED"/>
    <property type="match status" value="1"/>
</dbReference>
<dbReference type="PANTHER" id="PTHR16254:SF14">
    <property type="entry name" value="TRANSMEMBRANE AND COILED-COIL DOMAIN-CONTAINING PROTEIN 3"/>
    <property type="match status" value="1"/>
</dbReference>
<dbReference type="Pfam" id="PF00999">
    <property type="entry name" value="Na_H_Exchanger"/>
    <property type="match status" value="1"/>
</dbReference>
<proteinExistence type="evidence at protein level"/>
<keyword id="KW-0025">Alternative splicing</keyword>
<keyword id="KW-0050">Antiport</keyword>
<keyword id="KW-0333">Golgi apparatus</keyword>
<keyword id="KW-0406">Ion transport</keyword>
<keyword id="KW-0472">Membrane</keyword>
<keyword id="KW-0630">Potassium</keyword>
<keyword id="KW-0633">Potassium transport</keyword>
<keyword id="KW-1185">Reference proteome</keyword>
<keyword id="KW-0732">Signal</keyword>
<keyword id="KW-0812">Transmembrane</keyword>
<keyword id="KW-1133">Transmembrane helix</keyword>
<keyword id="KW-0813">Transport</keyword>
<protein>
    <recommendedName>
        <fullName evidence="6">K(+) efflux antiporter 4</fullName>
        <shortName evidence="6">AtKEA4</shortName>
    </recommendedName>
</protein>